<comment type="function">
    <text evidence="2">May be involved in the biosynthesis of caffeine.</text>
</comment>
<comment type="cofactor">
    <cofactor evidence="3">
        <name>Mg(2+)</name>
        <dbReference type="ChEBI" id="CHEBI:18420"/>
    </cofactor>
    <text evidence="3">Binds 1 Mg(2+) ion per subunit.</text>
</comment>
<comment type="pathway">
    <text evidence="2">Alkaloid biosynthesis.</text>
</comment>
<comment type="tissue specificity">
    <text evidence="5">Expressed in roots, stems, young and old leaves.</text>
</comment>
<comment type="similarity">
    <text evidence="9">Belongs to the methyltransferase superfamily. Type-7 methyltransferase family.</text>
</comment>
<evidence type="ECO:0000250" key="1">
    <source>
        <dbReference type="UniProtKB" id="A4GE70"/>
    </source>
</evidence>
<evidence type="ECO:0000250" key="2">
    <source>
        <dbReference type="UniProtKB" id="Q8H0D2"/>
    </source>
</evidence>
<evidence type="ECO:0000250" key="3">
    <source>
        <dbReference type="UniProtKB" id="Q9FLN8"/>
    </source>
</evidence>
<evidence type="ECO:0000250" key="4">
    <source>
        <dbReference type="UniProtKB" id="Q9FZN8"/>
    </source>
</evidence>
<evidence type="ECO:0000269" key="5">
    <source>
    </source>
</evidence>
<evidence type="ECO:0000303" key="6">
    <source>
    </source>
</evidence>
<evidence type="ECO:0000303" key="7">
    <source>
    </source>
</evidence>
<evidence type="ECO:0000303" key="8">
    <source>
    </source>
</evidence>
<evidence type="ECO:0000305" key="9"/>
<organism>
    <name type="scientific">Coffea arabica</name>
    <name type="common">Arabian coffee</name>
    <dbReference type="NCBI Taxonomy" id="13443"/>
    <lineage>
        <taxon>Eukaryota</taxon>
        <taxon>Viridiplantae</taxon>
        <taxon>Streptophyta</taxon>
        <taxon>Embryophyta</taxon>
        <taxon>Tracheophyta</taxon>
        <taxon>Spermatophyta</taxon>
        <taxon>Magnoliopsida</taxon>
        <taxon>eudicotyledons</taxon>
        <taxon>Gunneridae</taxon>
        <taxon>Pentapetalae</taxon>
        <taxon>asterids</taxon>
        <taxon>lamiids</taxon>
        <taxon>Gentianales</taxon>
        <taxon>Rubiaceae</taxon>
        <taxon>Ixoroideae</taxon>
        <taxon>Gardenieae complex</taxon>
        <taxon>Bertiereae - Coffeeae clade</taxon>
        <taxon>Coffeeae</taxon>
        <taxon>Coffea</taxon>
    </lineage>
</organism>
<feature type="chain" id="PRO_0000408308" description="Probable caffeine synthase 4">
    <location>
        <begin position="1"/>
        <end position="385"/>
    </location>
</feature>
<feature type="binding site" evidence="1">
    <location>
        <position position="18"/>
    </location>
    <ligand>
        <name>S-adenosyl-L-homocysteine</name>
        <dbReference type="ChEBI" id="CHEBI:57856"/>
    </ligand>
</feature>
<feature type="binding site" evidence="1">
    <location>
        <position position="62"/>
    </location>
    <ligand>
        <name>S-adenosyl-L-homocysteine</name>
        <dbReference type="ChEBI" id="CHEBI:57856"/>
    </ligand>
</feature>
<feature type="binding site" evidence="1">
    <location>
        <position position="67"/>
    </location>
    <ligand>
        <name>S-adenosyl-L-homocysteine</name>
        <dbReference type="ChEBI" id="CHEBI:57856"/>
    </ligand>
</feature>
<feature type="binding site" evidence="1">
    <location>
        <position position="101"/>
    </location>
    <ligand>
        <name>S-adenosyl-L-homocysteine</name>
        <dbReference type="ChEBI" id="CHEBI:57856"/>
    </ligand>
</feature>
<feature type="binding site" evidence="1">
    <location>
        <position position="102"/>
    </location>
    <ligand>
        <name>S-adenosyl-L-homocysteine</name>
        <dbReference type="ChEBI" id="CHEBI:57856"/>
    </ligand>
</feature>
<feature type="binding site" evidence="1">
    <location>
        <position position="140"/>
    </location>
    <ligand>
        <name>S-adenosyl-L-homocysteine</name>
        <dbReference type="ChEBI" id="CHEBI:57856"/>
    </ligand>
</feature>
<feature type="binding site" evidence="1">
    <location>
        <position position="141"/>
    </location>
    <ligand>
        <name>S-adenosyl-L-homocysteine</name>
        <dbReference type="ChEBI" id="CHEBI:57856"/>
    </ligand>
</feature>
<feature type="binding site" evidence="1">
    <location>
        <position position="158"/>
    </location>
    <ligand>
        <name>caffeine</name>
        <dbReference type="ChEBI" id="CHEBI:27732"/>
    </ligand>
</feature>
<feature type="binding site" evidence="1">
    <location>
        <position position="161"/>
    </location>
    <ligand>
        <name>caffeine</name>
        <dbReference type="ChEBI" id="CHEBI:27732"/>
    </ligand>
</feature>
<feature type="binding site" evidence="1">
    <location>
        <position position="162"/>
    </location>
    <ligand>
        <name>caffeine</name>
        <dbReference type="ChEBI" id="CHEBI:27732"/>
    </ligand>
</feature>
<feature type="binding site" evidence="3">
    <location>
        <position position="179"/>
    </location>
    <ligand>
        <name>Mg(2+)</name>
        <dbReference type="ChEBI" id="CHEBI:18420"/>
    </ligand>
</feature>
<feature type="binding site" evidence="1">
    <location>
        <position position="238"/>
    </location>
    <ligand>
        <name>caffeine</name>
        <dbReference type="ChEBI" id="CHEBI:27732"/>
    </ligand>
</feature>
<feature type="binding site" evidence="3">
    <location>
        <position position="261"/>
    </location>
    <ligand>
        <name>Mg(2+)</name>
        <dbReference type="ChEBI" id="CHEBI:18420"/>
    </ligand>
</feature>
<feature type="binding site" evidence="3">
    <location>
        <position position="263"/>
    </location>
    <ligand>
        <name>Mg(2+)</name>
        <dbReference type="ChEBI" id="CHEBI:18420"/>
    </ligand>
</feature>
<feature type="binding site" evidence="3">
    <location>
        <position position="264"/>
    </location>
    <ligand>
        <name>Mg(2+)</name>
        <dbReference type="ChEBI" id="CHEBI:18420"/>
    </ligand>
</feature>
<feature type="binding site" evidence="1">
    <location>
        <position position="369"/>
    </location>
    <ligand>
        <name>caffeine</name>
        <dbReference type="ChEBI" id="CHEBI:27732"/>
    </ligand>
</feature>
<feature type="site" description="Involved in substrate discrimination" evidence="4">
    <location>
        <position position="155"/>
    </location>
</feature>
<feature type="site" description="Involved in substrate discrimination" evidence="4">
    <location>
        <position position="267"/>
    </location>
</feature>
<feature type="site" description="Involved in substrate discrimination" evidence="4">
    <location>
        <position position="344"/>
    </location>
</feature>
<feature type="sequence conflict" description="In Ref. 3; AHA82523." evidence="9" ref="3">
    <original>S</original>
    <variation>L</variation>
    <location>
        <position position="22"/>
    </location>
</feature>
<feature type="sequence conflict" description="In Ref. 2; BAC43759 and 3; AHA82523." evidence="9" ref="2 3">
    <original>K</original>
    <variation>R</variation>
    <location>
        <position position="83"/>
    </location>
</feature>
<feature type="sequence conflict" description="In Ref. 3; AHA82523." evidence="9" ref="3">
    <original>I</original>
    <variation>V</variation>
    <location>
        <position position="385"/>
    </location>
</feature>
<accession>Q9AVL9</accession>
<accession>A0A096X776</accession>
<accession>Q8H0F8</accession>
<sequence>MELQEVLHMNGGEGEASYAKNSSFNQLVLAKVKPVLEQCVRELLRANLPNINKCIKVADLGCASGPNTLLTVWDTVQSIDKVKQEMKNELERPTIQVFLTDLFQNDFNSVFMLLPSFYRKLEKENGRKIGSCLIAAMPGSFHGRLFPEESMHFLHSSYSLQFLSQVPSGLVTELGITANKRSIYSSKASPPPVQKAYLDQFTKDFTTFLRMRSEELLSRGRMLLTCICKGDECDGPNTMDLLEMAINDLVAEGRLGEEKLDSFNVPIYTASVEEVKCMVEEEGSFEILYLQTFKLRYDAGFSIDDDCQVRSHSPVYSDEHARAAHVASLIRSVYEPILASHFGEAIIPDIFHRFATNAAKVIRLGKGFYNNLIISLAKKPEKSDI</sequence>
<name>CS4_COFAR</name>
<protein>
    <recommendedName>
        <fullName evidence="7">Probable caffeine synthase 4</fullName>
        <shortName evidence="7">CtCS4</shortName>
        <ecNumber evidence="2">2.1.1.-</ecNumber>
    </recommendedName>
    <alternativeName>
        <fullName evidence="6 8">Methyltransferase-like 1</fullName>
        <shortName evidence="6 8">CaMTL1</shortName>
    </alternativeName>
</protein>
<reference key="1">
    <citation type="journal article" date="2001" name="J. Biol. Chem.">
        <title>7-Methylxanthine methyltransferase of coffee plants. Gene isolation and enzymatic properties.</title>
        <authorList>
            <person name="Ogawa M."/>
            <person name="Herai Y."/>
            <person name="Koizumi N."/>
            <person name="Kusano T."/>
            <person name="Sano H."/>
        </authorList>
    </citation>
    <scope>NUCLEOTIDE SEQUENCE [MRNA]</scope>
    <scope>TISSUE SPECIFICITY</scope>
    <source>
        <strain>cv. Caturra</strain>
    </source>
</reference>
<reference key="2">
    <citation type="journal article" date="2003" name="FEBS Lett.">
        <title>Isolation of a new dual-functional caffeine synthase gene encoding an enzyme for the conversion of 7-methylxanthine to caffeine from coffee (Coffea arabica L.).</title>
        <authorList>
            <person name="Mizuno K."/>
            <person name="Okuda A."/>
            <person name="Kato M."/>
            <person name="Yoneyama N."/>
            <person name="Tanaka H."/>
            <person name="Ashihara H."/>
            <person name="Fujimura T."/>
        </authorList>
    </citation>
    <scope>NUCLEOTIDE SEQUENCE [MRNA]</scope>
</reference>
<reference key="3">
    <citation type="journal article" date="2015" name="Planta">
        <title>Differential regulation of caffeine metabolism in Coffea arabica (Arabica) and Coffea canephora (Robusta).</title>
        <authorList>
            <person name="Perrois C."/>
            <person name="Strickler S.R."/>
            <person name="Mathieu G."/>
            <person name="Lepelley M."/>
            <person name="Bedon L."/>
            <person name="Michaux S."/>
            <person name="Husson J."/>
            <person name="Mueller L."/>
            <person name="Privat I."/>
        </authorList>
    </citation>
    <scope>NUCLEOTIDE SEQUENCE [GENOMIC DNA]</scope>
    <scope>GENE FAMILY</scope>
    <scope>NOMENCLATURE</scope>
    <source>
        <strain>cv. ET39</strain>
    </source>
</reference>
<proteinExistence type="evidence at transcript level"/>
<gene>
    <name evidence="7" type="primary">CS4</name>
    <name evidence="6 8" type="synonym">MTL1</name>
</gene>
<keyword id="KW-0017">Alkaloid metabolism</keyword>
<keyword id="KW-0460">Magnesium</keyword>
<keyword id="KW-0479">Metal-binding</keyword>
<keyword id="KW-0489">Methyltransferase</keyword>
<keyword id="KW-1185">Reference proteome</keyword>
<keyword id="KW-0949">S-adenosyl-L-methionine</keyword>
<keyword id="KW-0808">Transferase</keyword>
<dbReference type="EC" id="2.1.1.-" evidence="2"/>
<dbReference type="EMBL" id="AB039725">
    <property type="protein sequence ID" value="BAB39213.1"/>
    <property type="molecule type" value="mRNA"/>
</dbReference>
<dbReference type="EMBL" id="AB054843">
    <property type="protein sequence ID" value="BAC43759.1"/>
    <property type="molecule type" value="mRNA"/>
</dbReference>
<dbReference type="EMBL" id="KF743059">
    <property type="protein sequence ID" value="AHA82523.1"/>
    <property type="molecule type" value="Genomic_DNA"/>
</dbReference>
<dbReference type="SMR" id="Q9AVL9"/>
<dbReference type="Proteomes" id="UP000515148">
    <property type="component" value="Unplaced"/>
</dbReference>
<dbReference type="GO" id="GO:0046872">
    <property type="term" value="F:metal ion binding"/>
    <property type="evidence" value="ECO:0007669"/>
    <property type="project" value="UniProtKB-KW"/>
</dbReference>
<dbReference type="GO" id="GO:0008168">
    <property type="term" value="F:methyltransferase activity"/>
    <property type="evidence" value="ECO:0007669"/>
    <property type="project" value="UniProtKB-KW"/>
</dbReference>
<dbReference type="GO" id="GO:0009820">
    <property type="term" value="P:alkaloid metabolic process"/>
    <property type="evidence" value="ECO:0007669"/>
    <property type="project" value="UniProtKB-KW"/>
</dbReference>
<dbReference type="GO" id="GO:0032259">
    <property type="term" value="P:methylation"/>
    <property type="evidence" value="ECO:0007669"/>
    <property type="project" value="UniProtKB-KW"/>
</dbReference>
<dbReference type="Gene3D" id="1.10.1200.270">
    <property type="entry name" value="Methyltransferase, alpha-helical capping domain"/>
    <property type="match status" value="1"/>
</dbReference>
<dbReference type="Gene3D" id="3.40.50.150">
    <property type="entry name" value="Vaccinia Virus protein VP39"/>
    <property type="match status" value="1"/>
</dbReference>
<dbReference type="InterPro" id="IPR005299">
    <property type="entry name" value="MeTrfase_7"/>
</dbReference>
<dbReference type="InterPro" id="IPR042086">
    <property type="entry name" value="MeTrfase_capping"/>
</dbReference>
<dbReference type="InterPro" id="IPR029063">
    <property type="entry name" value="SAM-dependent_MTases_sf"/>
</dbReference>
<dbReference type="PANTHER" id="PTHR31009">
    <property type="entry name" value="S-ADENOSYL-L-METHIONINE:CARBOXYL METHYLTRANSFERASE FAMILY PROTEIN"/>
    <property type="match status" value="1"/>
</dbReference>
<dbReference type="Pfam" id="PF03492">
    <property type="entry name" value="Methyltransf_7"/>
    <property type="match status" value="1"/>
</dbReference>
<dbReference type="SUPFAM" id="SSF53335">
    <property type="entry name" value="S-adenosyl-L-methionine-dependent methyltransferases"/>
    <property type="match status" value="1"/>
</dbReference>